<name>PSTB_MYCLE</name>
<feature type="chain" id="PRO_0000092842" description="Phosphate import ATP-binding protein PstB">
    <location>
        <begin position="1"/>
        <end position="258"/>
    </location>
</feature>
<feature type="domain" description="ABC transporter" evidence="1">
    <location>
        <begin position="5"/>
        <end position="247"/>
    </location>
</feature>
<feature type="binding site" evidence="1">
    <location>
        <begin position="37"/>
        <end position="44"/>
    </location>
    <ligand>
        <name>ATP</name>
        <dbReference type="ChEBI" id="CHEBI:30616"/>
    </ligand>
</feature>
<dbReference type="EC" id="7.3.2.1" evidence="1"/>
<dbReference type="EMBL" id="U15182">
    <property type="protein sequence ID" value="AAA62990.1"/>
    <property type="molecule type" value="Genomic_DNA"/>
</dbReference>
<dbReference type="EMBL" id="AL583924">
    <property type="protein sequence ID" value="CAC31144.1"/>
    <property type="molecule type" value="Genomic_DNA"/>
</dbReference>
<dbReference type="PIR" id="H87182">
    <property type="entry name" value="H87182"/>
</dbReference>
<dbReference type="RefSeq" id="NP_302434.1">
    <property type="nucleotide sequence ID" value="NC_002677.1"/>
</dbReference>
<dbReference type="RefSeq" id="WP_010908754.1">
    <property type="nucleotide sequence ID" value="NC_002677.1"/>
</dbReference>
<dbReference type="SMR" id="Q50046"/>
<dbReference type="STRING" id="272631.gene:17576046"/>
<dbReference type="KEGG" id="mle:ML2189"/>
<dbReference type="PATRIC" id="fig|272631.5.peg.4151"/>
<dbReference type="Leproma" id="ML2189"/>
<dbReference type="eggNOG" id="COG1117">
    <property type="taxonomic scope" value="Bacteria"/>
</dbReference>
<dbReference type="HOGENOM" id="CLU_000604_1_22_11"/>
<dbReference type="OrthoDB" id="4398079at2"/>
<dbReference type="Proteomes" id="UP000000806">
    <property type="component" value="Chromosome"/>
</dbReference>
<dbReference type="GO" id="GO:0005886">
    <property type="term" value="C:plasma membrane"/>
    <property type="evidence" value="ECO:0007669"/>
    <property type="project" value="UniProtKB-SubCell"/>
</dbReference>
<dbReference type="GO" id="GO:0005524">
    <property type="term" value="F:ATP binding"/>
    <property type="evidence" value="ECO:0007669"/>
    <property type="project" value="UniProtKB-KW"/>
</dbReference>
<dbReference type="GO" id="GO:0016887">
    <property type="term" value="F:ATP hydrolysis activity"/>
    <property type="evidence" value="ECO:0007669"/>
    <property type="project" value="InterPro"/>
</dbReference>
<dbReference type="GO" id="GO:0015415">
    <property type="term" value="F:ATPase-coupled phosphate ion transmembrane transporter activity"/>
    <property type="evidence" value="ECO:0007669"/>
    <property type="project" value="UniProtKB-EC"/>
</dbReference>
<dbReference type="GO" id="GO:0035435">
    <property type="term" value="P:phosphate ion transmembrane transport"/>
    <property type="evidence" value="ECO:0007669"/>
    <property type="project" value="InterPro"/>
</dbReference>
<dbReference type="CDD" id="cd03260">
    <property type="entry name" value="ABC_PstB_phosphate_transporter"/>
    <property type="match status" value="1"/>
</dbReference>
<dbReference type="FunFam" id="3.40.50.300:FF:000132">
    <property type="entry name" value="Phosphate import ATP-binding protein PstB"/>
    <property type="match status" value="1"/>
</dbReference>
<dbReference type="Gene3D" id="3.40.50.300">
    <property type="entry name" value="P-loop containing nucleotide triphosphate hydrolases"/>
    <property type="match status" value="1"/>
</dbReference>
<dbReference type="InterPro" id="IPR003593">
    <property type="entry name" value="AAA+_ATPase"/>
</dbReference>
<dbReference type="InterPro" id="IPR003439">
    <property type="entry name" value="ABC_transporter-like_ATP-bd"/>
</dbReference>
<dbReference type="InterPro" id="IPR017871">
    <property type="entry name" value="ABC_transporter-like_CS"/>
</dbReference>
<dbReference type="InterPro" id="IPR027417">
    <property type="entry name" value="P-loop_NTPase"/>
</dbReference>
<dbReference type="InterPro" id="IPR005670">
    <property type="entry name" value="PstB-like"/>
</dbReference>
<dbReference type="NCBIfam" id="TIGR00972">
    <property type="entry name" value="3a0107s01c2"/>
    <property type="match status" value="1"/>
</dbReference>
<dbReference type="PANTHER" id="PTHR43423">
    <property type="entry name" value="ABC TRANSPORTER I FAMILY MEMBER 17"/>
    <property type="match status" value="1"/>
</dbReference>
<dbReference type="PANTHER" id="PTHR43423:SF1">
    <property type="entry name" value="ABC TRANSPORTER I FAMILY MEMBER 17"/>
    <property type="match status" value="1"/>
</dbReference>
<dbReference type="Pfam" id="PF00005">
    <property type="entry name" value="ABC_tran"/>
    <property type="match status" value="1"/>
</dbReference>
<dbReference type="SMART" id="SM00382">
    <property type="entry name" value="AAA"/>
    <property type="match status" value="1"/>
</dbReference>
<dbReference type="SUPFAM" id="SSF52540">
    <property type="entry name" value="P-loop containing nucleoside triphosphate hydrolases"/>
    <property type="match status" value="1"/>
</dbReference>
<dbReference type="PROSITE" id="PS00211">
    <property type="entry name" value="ABC_TRANSPORTER_1"/>
    <property type="match status" value="1"/>
</dbReference>
<dbReference type="PROSITE" id="PS50893">
    <property type="entry name" value="ABC_TRANSPORTER_2"/>
    <property type="match status" value="1"/>
</dbReference>
<dbReference type="PROSITE" id="PS51238">
    <property type="entry name" value="PSTB"/>
    <property type="match status" value="1"/>
</dbReference>
<comment type="function">
    <text evidence="1">Part of the ABC transporter complex PstSACB involved in phosphate import. Responsible for energy coupling to the transport system.</text>
</comment>
<comment type="catalytic activity">
    <reaction evidence="1">
        <text>phosphate(out) + ATP + H2O = ADP + 2 phosphate(in) + H(+)</text>
        <dbReference type="Rhea" id="RHEA:24440"/>
        <dbReference type="ChEBI" id="CHEBI:15377"/>
        <dbReference type="ChEBI" id="CHEBI:15378"/>
        <dbReference type="ChEBI" id="CHEBI:30616"/>
        <dbReference type="ChEBI" id="CHEBI:43474"/>
        <dbReference type="ChEBI" id="CHEBI:456216"/>
        <dbReference type="EC" id="7.3.2.1"/>
    </reaction>
</comment>
<comment type="subunit">
    <text evidence="1">The complex is composed of two ATP-binding proteins (PstB), two transmembrane proteins (PstC and PstA) and a solute-binding protein (PstS).</text>
</comment>
<comment type="subcellular location">
    <subcellularLocation>
        <location evidence="1">Cell membrane</location>
        <topology evidence="1">Peripheral membrane protein</topology>
    </subcellularLocation>
</comment>
<comment type="similarity">
    <text evidence="1">Belongs to the ABC transporter superfamily. Phosphate importer (TC 3.A.1.7) family.</text>
</comment>
<gene>
    <name evidence="1" type="primary">pstB</name>
    <name type="synonym">phoT</name>
    <name type="ordered locus">ML2189</name>
</gene>
<accession>Q50046</accession>
<proteinExistence type="inferred from homology"/>
<evidence type="ECO:0000255" key="1">
    <source>
        <dbReference type="HAMAP-Rule" id="MF_01702"/>
    </source>
</evidence>
<sequence>MAKRLDLKGVNIYYGSFQAVLDVSLAVLPRSVTAFIGASGCGKTTVLRTLNRMHEVVPGARVEGTVLLDDEDIYAPGIDPVGVRRAIGMVFQRPNPFPAMSIRDNVVAGLKLQGVRNRKVLDDTAEYFLRGTNLWDEVKDRLDKPGGGLSGGQQQRLCIARAIAVQPDVLLMDEPCSSLDPISTMAIEELIGELKQEYTIVIVTHNMQQAARVSDQTAFFNLEAVGRPGRLVEIDDTEKIFSNPTEKATEDYISGRFG</sequence>
<keyword id="KW-0067">ATP-binding</keyword>
<keyword id="KW-1003">Cell membrane</keyword>
<keyword id="KW-0472">Membrane</keyword>
<keyword id="KW-0547">Nucleotide-binding</keyword>
<keyword id="KW-0592">Phosphate transport</keyword>
<keyword id="KW-1185">Reference proteome</keyword>
<keyword id="KW-1278">Translocase</keyword>
<keyword id="KW-0813">Transport</keyword>
<protein>
    <recommendedName>
        <fullName evidence="1">Phosphate import ATP-binding protein PstB</fullName>
        <ecNumber evidence="1">7.3.2.1</ecNumber>
    </recommendedName>
    <alternativeName>
        <fullName evidence="1">ABC phosphate transporter</fullName>
    </alternativeName>
    <alternativeName>
        <fullName evidence="1">Phosphate-transporting ATPase</fullName>
    </alternativeName>
</protein>
<organism>
    <name type="scientific">Mycobacterium leprae (strain TN)</name>
    <dbReference type="NCBI Taxonomy" id="272631"/>
    <lineage>
        <taxon>Bacteria</taxon>
        <taxon>Bacillati</taxon>
        <taxon>Actinomycetota</taxon>
        <taxon>Actinomycetes</taxon>
        <taxon>Mycobacteriales</taxon>
        <taxon>Mycobacteriaceae</taxon>
        <taxon>Mycobacterium</taxon>
    </lineage>
</organism>
<reference key="1">
    <citation type="submission" date="1995-04" db="EMBL/GenBank/DDBJ databases">
        <authorList>
            <person name="Smith D.R."/>
            <person name="Robison K."/>
        </authorList>
    </citation>
    <scope>NUCLEOTIDE SEQUENCE [GENOMIC DNA]</scope>
</reference>
<reference key="2">
    <citation type="journal article" date="2001" name="Nature">
        <title>Massive gene decay in the leprosy bacillus.</title>
        <authorList>
            <person name="Cole S.T."/>
            <person name="Eiglmeier K."/>
            <person name="Parkhill J."/>
            <person name="James K.D."/>
            <person name="Thomson N.R."/>
            <person name="Wheeler P.R."/>
            <person name="Honore N."/>
            <person name="Garnier T."/>
            <person name="Churcher C.M."/>
            <person name="Harris D.E."/>
            <person name="Mungall K.L."/>
            <person name="Basham D."/>
            <person name="Brown D."/>
            <person name="Chillingworth T."/>
            <person name="Connor R."/>
            <person name="Davies R.M."/>
            <person name="Devlin K."/>
            <person name="Duthoy S."/>
            <person name="Feltwell T."/>
            <person name="Fraser A."/>
            <person name="Hamlin N."/>
            <person name="Holroyd S."/>
            <person name="Hornsby T."/>
            <person name="Jagels K."/>
            <person name="Lacroix C."/>
            <person name="Maclean J."/>
            <person name="Moule S."/>
            <person name="Murphy L.D."/>
            <person name="Oliver K."/>
            <person name="Quail M.A."/>
            <person name="Rajandream M.A."/>
            <person name="Rutherford K.M."/>
            <person name="Rutter S."/>
            <person name="Seeger K."/>
            <person name="Simon S."/>
            <person name="Simmonds M."/>
            <person name="Skelton J."/>
            <person name="Squares R."/>
            <person name="Squares S."/>
            <person name="Stevens K."/>
            <person name="Taylor K."/>
            <person name="Whitehead S."/>
            <person name="Woodward J.R."/>
            <person name="Barrell B.G."/>
        </authorList>
    </citation>
    <scope>NUCLEOTIDE SEQUENCE [LARGE SCALE GENOMIC DNA]</scope>
    <source>
        <strain>TN</strain>
    </source>
</reference>